<comment type="function">
    <text evidence="6">Copper amine oxidase that can use putrescine and spermidine as substrates (PubMed:28383668). Involved in putrescine catabolism in peroxisomes in response to salt stress (PubMed:28383668). Regulates arginine-dependent nitric oxide (NO) production, a key signaling molecule regulating a wide range of physiological processes including responses to salt stress, by influencing arginine bioavailability (PubMed:28383668). Modulates primary root growth (PubMed:28383668).</text>
</comment>
<comment type="catalytic activity">
    <reaction evidence="6">
        <text>a primary methyl amine + O2 + H2O = an aldehyde + H2O2 + NH4(+)</text>
        <dbReference type="Rhea" id="RHEA:16153"/>
        <dbReference type="ChEBI" id="CHEBI:15377"/>
        <dbReference type="ChEBI" id="CHEBI:15379"/>
        <dbReference type="ChEBI" id="CHEBI:16240"/>
        <dbReference type="ChEBI" id="CHEBI:17478"/>
        <dbReference type="ChEBI" id="CHEBI:28938"/>
        <dbReference type="ChEBI" id="CHEBI:228804"/>
        <dbReference type="EC" id="1.4.3.21"/>
    </reaction>
    <physiologicalReaction direction="left-to-right" evidence="6">
        <dbReference type="Rhea" id="RHEA:16154"/>
    </physiologicalReaction>
</comment>
<comment type="cofactor">
    <cofactor evidence="4">
        <name>Cu cation</name>
        <dbReference type="ChEBI" id="CHEBI:23378"/>
    </cofactor>
    <cofactor evidence="3">
        <name>Zn(2+)</name>
        <dbReference type="ChEBI" id="CHEBI:29105"/>
    </cofactor>
    <text evidence="3 4">Binds 1 copper ion per subunit (By similarity). Can also use zinc ion as cofactor (By similarity).</text>
</comment>
<comment type="cofactor">
    <cofactor evidence="4">
        <name>L-topaquinone</name>
        <dbReference type="ChEBI" id="CHEBI:79027"/>
    </cofactor>
    <text evidence="4">Contains 1 topaquinone per subunit.</text>
</comment>
<comment type="pathway">
    <text evidence="6">Amine and polyamine degradation; putrescine degradation.</text>
</comment>
<comment type="subunit">
    <text evidence="1">Homodimer.</text>
</comment>
<comment type="subcellular location">
    <subcellularLocation>
        <location evidence="2">Peroxisome</location>
    </subcellularLocation>
</comment>
<comment type="tissue specificity">
    <text evidence="7">Expressed exclusively in leaves.</text>
</comment>
<comment type="developmental stage">
    <text evidence="7">In young seedlings, first observed in hydathodes and borders of new emerging cotyledons and in leaf primordia (PubMed:31862580). Accumulates in expanding leaves (PubMed:31862580).</text>
</comment>
<comment type="induction">
    <text evidence="7">Induced transiently by auxin (IAA) (PubMed:31862580). Accumulates during dehydration recovery, wounding and treatment with putrescine (Put) and jasmonic acid (MeJA) (PubMed:31862580). Repressed by abscisic acid (ABA) and salicylic acid (SA) (PubMed:31862580).</text>
</comment>
<comment type="PTM">
    <text evidence="4">Topaquinone (TPQ) is generated by copper-dependent autoxidation of a specific tyrosyl residue.</text>
</comment>
<comment type="disruption phenotype">
    <text evidence="6">Decreased nitric oxide (NO) production in seedlings after elicitor treatment with 2,6-dichloroisonicotinic acid (INA) in root tips and salt stress associated with a reduced arginine availability but with a normal nitrate reductase activity in plants (PubMed:28383668). Reduced primary root length (PubMed:28383668).</text>
</comment>
<comment type="similarity">
    <text evidence="10">Belongs to the copper/topaquinone oxidase family.</text>
</comment>
<comment type="sequence caution" evidence="10">
    <conflict type="erroneous gene model prediction">
        <sequence resource="EMBL-CDS" id="AAG60148"/>
    </conflict>
</comment>
<comment type="sequence caution" evidence="10">
    <conflict type="erroneous gene model prediction">
        <sequence resource="EMBL-CDS" id="AAG60151"/>
    </conflict>
</comment>
<evidence type="ECO:0000250" key="1">
    <source>
        <dbReference type="UniProtKB" id="A0A1S4BDC4"/>
    </source>
</evidence>
<evidence type="ECO:0000250" key="2">
    <source>
        <dbReference type="UniProtKB" id="F4IAX1"/>
    </source>
</evidence>
<evidence type="ECO:0000250" key="3">
    <source>
        <dbReference type="UniProtKB" id="P12807"/>
    </source>
</evidence>
<evidence type="ECO:0000250" key="4">
    <source>
        <dbReference type="UniProtKB" id="P46883"/>
    </source>
</evidence>
<evidence type="ECO:0000250" key="5">
    <source>
        <dbReference type="UniProtKB" id="Q43077"/>
    </source>
</evidence>
<evidence type="ECO:0000269" key="6">
    <source>
    </source>
</evidence>
<evidence type="ECO:0000269" key="7">
    <source>
    </source>
</evidence>
<evidence type="ECO:0000303" key="8">
    <source>
    </source>
</evidence>
<evidence type="ECO:0000303" key="9">
    <source>
    </source>
</evidence>
<evidence type="ECO:0000305" key="10"/>
<evidence type="ECO:0000312" key="11">
    <source>
        <dbReference type="Araport" id="AT1G31690"/>
    </source>
</evidence>
<evidence type="ECO:0000312" key="12">
    <source>
        <dbReference type="EMBL" id="AAG60148.1"/>
    </source>
</evidence>
<evidence type="ECO:0000312" key="13">
    <source>
        <dbReference type="EMBL" id="AAG60151.1"/>
    </source>
</evidence>
<gene>
    <name evidence="9" type="primary">CuAOalpha2</name>
    <name evidence="8" type="synonym">CuAO8</name>
    <name evidence="11" type="ordered locus">At1g31690</name>
    <name evidence="12" type="ORF">F27M3.11</name>
    <name evidence="13" type="ORF">F27M3.12</name>
</gene>
<accession>F4IAX0</accession>
<accession>Q9C6V8</accession>
<accession>Q9C6V9</accession>
<protein>
    <recommendedName>
        <fullName evidence="9">Amine oxidase [copper-containing] alpha 2, peroxisomal</fullName>
        <shortName evidence="8">AtCuAO8</shortName>
        <shortName evidence="9">AtCuAOalpha2</shortName>
        <ecNumber evidence="6">1.4.3.21</ecNumber>
    </recommendedName>
</protein>
<name>CAOA2_ARATH</name>
<feature type="chain" id="PRO_5003309597" description="Amine oxidase [copper-containing] alpha 2, peroxisomal">
    <location>
        <begin position="1"/>
        <end position="677"/>
    </location>
</feature>
<feature type="active site" description="Proton acceptor" evidence="3">
    <location>
        <position position="322"/>
    </location>
</feature>
<feature type="active site" description="Schiff-base intermediate with substrate; via topaquinone" evidence="3">
    <location>
        <position position="410"/>
    </location>
</feature>
<feature type="binding site" evidence="3">
    <location>
        <begin position="320"/>
        <end position="331"/>
    </location>
    <ligand>
        <name>substrate</name>
    </ligand>
</feature>
<feature type="binding site" evidence="4">
    <location>
        <begin position="407"/>
        <end position="412"/>
    </location>
    <ligand>
        <name>substrate</name>
    </ligand>
</feature>
<feature type="binding site" evidence="5">
    <location>
        <position position="466"/>
    </location>
    <ligand>
        <name>Cu cation</name>
        <dbReference type="ChEBI" id="CHEBI:23378"/>
    </ligand>
</feature>
<feature type="binding site" evidence="5">
    <location>
        <position position="468"/>
    </location>
    <ligand>
        <name>Cu cation</name>
        <dbReference type="ChEBI" id="CHEBI:23378"/>
    </ligand>
</feature>
<feature type="binding site" evidence="5">
    <location>
        <position position="477"/>
    </location>
    <ligand>
        <name>Mn(2+)</name>
        <dbReference type="ChEBI" id="CHEBI:29035"/>
    </ligand>
</feature>
<feature type="binding site" evidence="5">
    <location>
        <position position="617"/>
    </location>
    <ligand>
        <name>Mn(2+)</name>
        <dbReference type="ChEBI" id="CHEBI:29035"/>
    </ligand>
</feature>
<feature type="binding site" evidence="5">
    <location>
        <position position="618"/>
    </location>
    <ligand>
        <name>Mn(2+)</name>
        <dbReference type="ChEBI" id="CHEBI:29035"/>
    </ligand>
</feature>
<feature type="binding site" evidence="5">
    <location>
        <position position="628"/>
    </location>
    <ligand>
        <name>Cu cation</name>
        <dbReference type="ChEBI" id="CHEBI:23378"/>
    </ligand>
</feature>
<feature type="modified residue" description="2',4',5'-topaquinone" evidence="5">
    <location>
        <position position="410"/>
    </location>
</feature>
<feature type="disulfide bond" evidence="5">
    <location>
        <begin position="341"/>
        <end position="367"/>
    </location>
</feature>
<dbReference type="EC" id="1.4.3.21" evidence="6"/>
<dbReference type="EMBL" id="AC074360">
    <property type="protein sequence ID" value="AAG60148.1"/>
    <property type="status" value="ALT_SEQ"/>
    <property type="molecule type" value="Genomic_DNA"/>
</dbReference>
<dbReference type="EMBL" id="AC074360">
    <property type="protein sequence ID" value="AAG60151.1"/>
    <property type="status" value="ALT_SEQ"/>
    <property type="molecule type" value="Genomic_DNA"/>
</dbReference>
<dbReference type="EMBL" id="CP002684">
    <property type="protein sequence ID" value="AEE31383.1"/>
    <property type="molecule type" value="Genomic_DNA"/>
</dbReference>
<dbReference type="RefSeq" id="NP_174450.2">
    <property type="nucleotide sequence ID" value="NM_102904.3"/>
</dbReference>
<dbReference type="SMR" id="F4IAX0"/>
<dbReference type="FunCoup" id="F4IAX0">
    <property type="interactions" value="124"/>
</dbReference>
<dbReference type="STRING" id="3702.F4IAX0"/>
<dbReference type="PaxDb" id="3702-AT1G31690.1"/>
<dbReference type="ProteomicsDB" id="197390"/>
<dbReference type="EnsemblPlants" id="AT1G31690.1">
    <property type="protein sequence ID" value="AT1G31690.1"/>
    <property type="gene ID" value="AT1G31690"/>
</dbReference>
<dbReference type="GeneID" id="840056"/>
<dbReference type="Gramene" id="AT1G31690.1">
    <property type="protein sequence ID" value="AT1G31690.1"/>
    <property type="gene ID" value="AT1G31690"/>
</dbReference>
<dbReference type="KEGG" id="ath:AT1G31690"/>
<dbReference type="Araport" id="AT1G31690"/>
<dbReference type="TAIR" id="AT1G31690">
    <property type="gene designation" value="CUAOALPHA2"/>
</dbReference>
<dbReference type="eggNOG" id="KOG1186">
    <property type="taxonomic scope" value="Eukaryota"/>
</dbReference>
<dbReference type="HOGENOM" id="CLU_011500_5_4_1"/>
<dbReference type="InParanoid" id="F4IAX0"/>
<dbReference type="OMA" id="MWRHTES"/>
<dbReference type="BioCyc" id="ARA:AT1G31690-MONOMER"/>
<dbReference type="BRENDA" id="1.4.3.21">
    <property type="organism ID" value="399"/>
</dbReference>
<dbReference type="UniPathway" id="UPA00188"/>
<dbReference type="PRO" id="PR:F4IAX0"/>
<dbReference type="Proteomes" id="UP000006548">
    <property type="component" value="Chromosome 1"/>
</dbReference>
<dbReference type="ExpressionAtlas" id="F4IAX0">
    <property type="expression patterns" value="baseline and differential"/>
</dbReference>
<dbReference type="GO" id="GO:0005634">
    <property type="term" value="C:nucleus"/>
    <property type="evidence" value="ECO:0007005"/>
    <property type="project" value="TAIR"/>
</dbReference>
<dbReference type="GO" id="GO:0005777">
    <property type="term" value="C:peroxisome"/>
    <property type="evidence" value="ECO:0007669"/>
    <property type="project" value="UniProtKB-SubCell"/>
</dbReference>
<dbReference type="GO" id="GO:0052595">
    <property type="term" value="F:aliphatic amine oxidase activity"/>
    <property type="evidence" value="ECO:0000314"/>
    <property type="project" value="UniProtKB"/>
</dbReference>
<dbReference type="GO" id="GO:0005507">
    <property type="term" value="F:copper ion binding"/>
    <property type="evidence" value="ECO:0007669"/>
    <property type="project" value="InterPro"/>
</dbReference>
<dbReference type="GO" id="GO:0008131">
    <property type="term" value="F:primary methylamine oxidase activity"/>
    <property type="evidence" value="ECO:0007669"/>
    <property type="project" value="UniProtKB-EC"/>
</dbReference>
<dbReference type="GO" id="GO:0048038">
    <property type="term" value="F:quinone binding"/>
    <property type="evidence" value="ECO:0007669"/>
    <property type="project" value="InterPro"/>
</dbReference>
<dbReference type="GO" id="GO:0090465">
    <property type="term" value="P:intracellular arginine homeostasis"/>
    <property type="evidence" value="ECO:0000315"/>
    <property type="project" value="UniProtKB"/>
</dbReference>
<dbReference type="GO" id="GO:0006809">
    <property type="term" value="P:nitric oxide biosynthetic process"/>
    <property type="evidence" value="ECO:0000315"/>
    <property type="project" value="UniProtKB"/>
</dbReference>
<dbReference type="GO" id="GO:0080022">
    <property type="term" value="P:primary root development"/>
    <property type="evidence" value="ECO:0000315"/>
    <property type="project" value="UniProtKB"/>
</dbReference>
<dbReference type="GO" id="GO:0009447">
    <property type="term" value="P:putrescine catabolic process"/>
    <property type="evidence" value="ECO:0007669"/>
    <property type="project" value="UniProtKB-UniPathway"/>
</dbReference>
<dbReference type="GO" id="GO:0009737">
    <property type="term" value="P:response to abscisic acid"/>
    <property type="evidence" value="ECO:0000270"/>
    <property type="project" value="UniProtKB"/>
</dbReference>
<dbReference type="GO" id="GO:0009733">
    <property type="term" value="P:response to auxin"/>
    <property type="evidence" value="ECO:0000270"/>
    <property type="project" value="UniProtKB"/>
</dbReference>
<dbReference type="GO" id="GO:0009753">
    <property type="term" value="P:response to jasmonic acid"/>
    <property type="evidence" value="ECO:0000270"/>
    <property type="project" value="UniProtKB"/>
</dbReference>
<dbReference type="GO" id="GO:1904585">
    <property type="term" value="P:response to putrescine"/>
    <property type="evidence" value="ECO:0000270"/>
    <property type="project" value="UniProtKB"/>
</dbReference>
<dbReference type="GO" id="GO:0009751">
    <property type="term" value="P:response to salicylic acid"/>
    <property type="evidence" value="ECO:0000270"/>
    <property type="project" value="UniProtKB"/>
</dbReference>
<dbReference type="GO" id="GO:0009651">
    <property type="term" value="P:response to salt stress"/>
    <property type="evidence" value="ECO:0000315"/>
    <property type="project" value="UniProtKB"/>
</dbReference>
<dbReference type="GO" id="GO:0009414">
    <property type="term" value="P:response to water deprivation"/>
    <property type="evidence" value="ECO:0000270"/>
    <property type="project" value="UniProtKB"/>
</dbReference>
<dbReference type="GO" id="GO:0009611">
    <property type="term" value="P:response to wounding"/>
    <property type="evidence" value="ECO:0000270"/>
    <property type="project" value="UniProtKB"/>
</dbReference>
<dbReference type="FunFam" id="2.70.98.20:FF:000004">
    <property type="entry name" value="Amine oxidase"/>
    <property type="match status" value="1"/>
</dbReference>
<dbReference type="FunFam" id="3.10.450.40:FF:000005">
    <property type="entry name" value="Amine oxidase"/>
    <property type="match status" value="1"/>
</dbReference>
<dbReference type="FunFam" id="3.10.450.40:FF:000012">
    <property type="entry name" value="Amine oxidase"/>
    <property type="match status" value="1"/>
</dbReference>
<dbReference type="Gene3D" id="3.10.450.40">
    <property type="match status" value="2"/>
</dbReference>
<dbReference type="Gene3D" id="2.70.98.20">
    <property type="entry name" value="Copper amine oxidase, catalytic domain"/>
    <property type="match status" value="1"/>
</dbReference>
<dbReference type="InterPro" id="IPR049947">
    <property type="entry name" value="Cu_Am_Ox_Cu-bd"/>
</dbReference>
<dbReference type="InterPro" id="IPR000269">
    <property type="entry name" value="Cu_amine_oxidase"/>
</dbReference>
<dbReference type="InterPro" id="IPR015798">
    <property type="entry name" value="Cu_amine_oxidase_C"/>
</dbReference>
<dbReference type="InterPro" id="IPR036460">
    <property type="entry name" value="Cu_amine_oxidase_C_sf"/>
</dbReference>
<dbReference type="InterPro" id="IPR016182">
    <property type="entry name" value="Cu_amine_oxidase_N-reg"/>
</dbReference>
<dbReference type="InterPro" id="IPR015800">
    <property type="entry name" value="Cu_amine_oxidase_N2"/>
</dbReference>
<dbReference type="InterPro" id="IPR015802">
    <property type="entry name" value="Cu_amine_oxidase_N3"/>
</dbReference>
<dbReference type="PANTHER" id="PTHR10638:SF87">
    <property type="entry name" value="AMINE OXIDASE [COPPER-CONTAINING] ALPHA 2, PEROXISOMAL-RELATED"/>
    <property type="match status" value="1"/>
</dbReference>
<dbReference type="PANTHER" id="PTHR10638">
    <property type="entry name" value="COPPER AMINE OXIDASE"/>
    <property type="match status" value="1"/>
</dbReference>
<dbReference type="Pfam" id="PF01179">
    <property type="entry name" value="Cu_amine_oxid"/>
    <property type="match status" value="1"/>
</dbReference>
<dbReference type="Pfam" id="PF02727">
    <property type="entry name" value="Cu_amine_oxidN2"/>
    <property type="match status" value="1"/>
</dbReference>
<dbReference type="Pfam" id="PF02728">
    <property type="entry name" value="Cu_amine_oxidN3"/>
    <property type="match status" value="1"/>
</dbReference>
<dbReference type="SUPFAM" id="SSF49998">
    <property type="entry name" value="Amine oxidase catalytic domain"/>
    <property type="match status" value="1"/>
</dbReference>
<dbReference type="SUPFAM" id="SSF54416">
    <property type="entry name" value="Amine oxidase N-terminal region"/>
    <property type="match status" value="2"/>
</dbReference>
<dbReference type="PROSITE" id="PS01165">
    <property type="entry name" value="COPPER_AMINE_OXID_2"/>
    <property type="match status" value="1"/>
</dbReference>
<keyword id="KW-0186">Copper</keyword>
<keyword id="KW-1015">Disulfide bond</keyword>
<keyword id="KW-0464">Manganese</keyword>
<keyword id="KW-0479">Metal-binding</keyword>
<keyword id="KW-0560">Oxidoreductase</keyword>
<keyword id="KW-0576">Peroxisome</keyword>
<keyword id="KW-1185">Reference proteome</keyword>
<keyword id="KW-0801">TPQ</keyword>
<sequence>MAQVHLTIFIFSSIFVISSSSFIPPPHPFDPLTETELKLVRNIINKSYPIGHNHKFTFQYVGLNEPEKSLVLSWHSSPDRNVKPPPRQAFVIARDKGMSREIVIDFSTRAIVSNKIHVGNGNPMLTIDEQQAATAVVQKYKPFCDSIIKRGLNLSEVVVTSSTMGWFGETKTKRFIRTIPFYLNGSVNTYLRPIEGMTIIVNLDQMKVTGFKDRFTGPMPKANGREYRISKLKPPFGPSLRSAVVFQPDGPGFKIDGHVVRWANWEFHMSFDVRAGLVISLASIFDMDMNRYRQVLYKGHLSEMFVPYMDPNDDWYFISYLDCGEFGCGQTAVSLEPYTDCPPNAAFMDGIFPGQDGTPTKISNVMCIFEKYAGDIMWRHTEAEVPGLKITEVRPDVSLVARMVTTVGNYDYIIEYEFKPSGSIKMGVGLTGVLEVKPVEYVHTSEIKEDDIYGTIVADNTVGVNHDHFVTFRLDLDIDGTENSFVRTELVTKRTPKSVNTPRKSYWTTKRNTAKTEADARVKLGLRAEELVVVNPTKKTKHGNEVGYRLLPGPASSPLLVQDDYPQIRAAFTNYNVWITPYNKSEVWASGLYADRSQGDDTLAVWSQRDREIENKDIVMWYTVGFHHVPCQEDFPTMPTMFGGFELRPTNFFEQNPVLKAKPFNLTTIPKCTTKNE</sequence>
<proteinExistence type="evidence at protein level"/>
<reference key="1">
    <citation type="journal article" date="2000" name="Nature">
        <title>Sequence and analysis of chromosome 1 of the plant Arabidopsis thaliana.</title>
        <authorList>
            <person name="Theologis A."/>
            <person name="Ecker J.R."/>
            <person name="Palm C.J."/>
            <person name="Federspiel N.A."/>
            <person name="Kaul S."/>
            <person name="White O."/>
            <person name="Alonso J."/>
            <person name="Altafi H."/>
            <person name="Araujo R."/>
            <person name="Bowman C.L."/>
            <person name="Brooks S.Y."/>
            <person name="Buehler E."/>
            <person name="Chan A."/>
            <person name="Chao Q."/>
            <person name="Chen H."/>
            <person name="Cheuk R.F."/>
            <person name="Chin C.W."/>
            <person name="Chung M.K."/>
            <person name="Conn L."/>
            <person name="Conway A.B."/>
            <person name="Conway A.R."/>
            <person name="Creasy T.H."/>
            <person name="Dewar K."/>
            <person name="Dunn P."/>
            <person name="Etgu P."/>
            <person name="Feldblyum T.V."/>
            <person name="Feng J.-D."/>
            <person name="Fong B."/>
            <person name="Fujii C.Y."/>
            <person name="Gill J.E."/>
            <person name="Goldsmith A.D."/>
            <person name="Haas B."/>
            <person name="Hansen N.F."/>
            <person name="Hughes B."/>
            <person name="Huizar L."/>
            <person name="Hunter J.L."/>
            <person name="Jenkins J."/>
            <person name="Johnson-Hopson C."/>
            <person name="Khan S."/>
            <person name="Khaykin E."/>
            <person name="Kim C.J."/>
            <person name="Koo H.L."/>
            <person name="Kremenetskaia I."/>
            <person name="Kurtz D.B."/>
            <person name="Kwan A."/>
            <person name="Lam B."/>
            <person name="Langin-Hooper S."/>
            <person name="Lee A."/>
            <person name="Lee J.M."/>
            <person name="Lenz C.A."/>
            <person name="Li J.H."/>
            <person name="Li Y.-P."/>
            <person name="Lin X."/>
            <person name="Liu S.X."/>
            <person name="Liu Z.A."/>
            <person name="Luros J.S."/>
            <person name="Maiti R."/>
            <person name="Marziali A."/>
            <person name="Militscher J."/>
            <person name="Miranda M."/>
            <person name="Nguyen M."/>
            <person name="Nierman W.C."/>
            <person name="Osborne B.I."/>
            <person name="Pai G."/>
            <person name="Peterson J."/>
            <person name="Pham P.K."/>
            <person name="Rizzo M."/>
            <person name="Rooney T."/>
            <person name="Rowley D."/>
            <person name="Sakano H."/>
            <person name="Salzberg S.L."/>
            <person name="Schwartz J.R."/>
            <person name="Shinn P."/>
            <person name="Southwick A.M."/>
            <person name="Sun H."/>
            <person name="Tallon L.J."/>
            <person name="Tambunga G."/>
            <person name="Toriumi M.J."/>
            <person name="Town C.D."/>
            <person name="Utterback T."/>
            <person name="Van Aken S."/>
            <person name="Vaysberg M."/>
            <person name="Vysotskaia V.S."/>
            <person name="Walker M."/>
            <person name="Wu D."/>
            <person name="Yu G."/>
            <person name="Fraser C.M."/>
            <person name="Venter J.C."/>
            <person name="Davis R.W."/>
        </authorList>
    </citation>
    <scope>NUCLEOTIDE SEQUENCE [LARGE SCALE GENOMIC DNA]</scope>
    <source>
        <strain>cv. Columbia</strain>
    </source>
</reference>
<reference key="2">
    <citation type="journal article" date="2017" name="Plant J.">
        <title>Araport11: a complete reannotation of the Arabidopsis thaliana reference genome.</title>
        <authorList>
            <person name="Cheng C.Y."/>
            <person name="Krishnakumar V."/>
            <person name="Chan A.P."/>
            <person name="Thibaud-Nissen F."/>
            <person name="Schobel S."/>
            <person name="Town C.D."/>
        </authorList>
    </citation>
    <scope>GENOME REANNOTATION</scope>
    <source>
        <strain>cv. Columbia</strain>
    </source>
</reference>
<reference key="3">
    <citation type="journal article" date="2017" name="J. Exp. Bot.">
        <title>Copper amine oxidase 8 regulates arginine-dependent nitric oxide production in Arabidopsis thaliana.</title>
        <authorList>
            <person name="Gross F."/>
            <person name="Rudolf E.-E."/>
            <person name="Thiele B."/>
            <person name="Durner J."/>
            <person name="Astier J."/>
        </authorList>
    </citation>
    <scope>FUNCTION</scope>
    <scope>DISRUPTION PHENOTYPE</scope>
    <scope>CATALYTIC ACTIVITY</scope>
    <scope>PATHWAY</scope>
    <source>
        <strain>cv. Columbia</strain>
    </source>
</reference>
<reference key="4">
    <citation type="journal article" date="2020" name="Plant Physiol. Biochem.">
        <title>Developmental, hormone- and stress-modulated expression profiles of four members of the Arabidopsis copper-amine oxidase gene family.</title>
        <authorList>
            <person name="Fraudentali I."/>
            <person name="Ghuge S.A."/>
            <person name="Carucci A."/>
            <person name="Tavladoraki P."/>
            <person name="Angelini R."/>
            <person name="Rodrigues-Pousada R.A."/>
            <person name="Cona A."/>
        </authorList>
    </citation>
    <scope>TISSUE SPECIFICITY</scope>
    <scope>DEVELOPMENTAL STAGE</scope>
    <scope>INDUCTION BY JASMONATE; ABSCISIC ACID; SALICYLIC ACID; DEHYDRATION RECOVERY; WOUNDING; PUTRESCINE AND AUXIN</scope>
    <scope>GENE FAMILY</scope>
    <scope>NOMENCLATURE</scope>
    <source>
        <strain>cv. Columbia</strain>
    </source>
</reference>
<organism>
    <name type="scientific">Arabidopsis thaliana</name>
    <name type="common">Mouse-ear cress</name>
    <dbReference type="NCBI Taxonomy" id="3702"/>
    <lineage>
        <taxon>Eukaryota</taxon>
        <taxon>Viridiplantae</taxon>
        <taxon>Streptophyta</taxon>
        <taxon>Embryophyta</taxon>
        <taxon>Tracheophyta</taxon>
        <taxon>Spermatophyta</taxon>
        <taxon>Magnoliopsida</taxon>
        <taxon>eudicotyledons</taxon>
        <taxon>Gunneridae</taxon>
        <taxon>Pentapetalae</taxon>
        <taxon>rosids</taxon>
        <taxon>malvids</taxon>
        <taxon>Brassicales</taxon>
        <taxon>Brassicaceae</taxon>
        <taxon>Camelineae</taxon>
        <taxon>Arabidopsis</taxon>
    </lineage>
</organism>